<reference key="1">
    <citation type="journal article" date="1989" name="Mol. Biochem. Parasitol.">
        <title>A new blood stage antigen of Plasmodium falciparum transported to the erythrocyte surface.</title>
        <authorList>
            <person name="Knapp B."/>
            <person name="Hundt E."/>
            <person name="Kuepper H.A."/>
        </authorList>
    </citation>
    <scope>NUCLEOTIDE SEQUENCE [GENOMIC DNA]</scope>
    <scope>DEVELOPMENTAL STAGE</scope>
    <source>
        <strain evidence="7">FCBR</strain>
    </source>
</reference>
<reference key="2">
    <citation type="journal article" date="1990" name="Mol. Biochem. Parasitol.">
        <title>Plasmodium falciparum aldolase: gene structure and localization.</title>
        <authorList>
            <person name="Knapp B."/>
            <person name="Hundt E."/>
            <person name="Kuepper H.A."/>
        </authorList>
    </citation>
    <scope>NUCLEOTIDE SEQUENCE [GENOMIC DNA]</scope>
    <scope>CATALYTIC ACTIVITY</scope>
    <scope>PATHWAY</scope>
    <scope>SUBCELLULAR LOCATION</scope>
    <scope>FUNCTION</scope>
    <scope>DEVELOPMENTAL STAGE</scope>
    <source>
        <strain evidence="6">FCBR</strain>
    </source>
</reference>
<reference key="3">
    <citation type="journal article" date="1998" name="Biochemistry">
        <title>Crystal structure of fructose-1,6-bisphosphate aldolase from the human malaria parasite Plasmodium falciparum.</title>
        <authorList>
            <person name="Kim H."/>
            <person name="Certa U."/>
            <person name="Dobeli H."/>
            <person name="Jakob P."/>
            <person name="Hol W.G.J."/>
        </authorList>
    </citation>
    <scope>X-RAY CRYSTALLOGRAPHY (3.0 ANGSTROMS)</scope>
    <scope>SUBUNIT</scope>
</reference>
<reference evidence="14 15" key="4">
    <citation type="journal article" date="2007" name="Proc. Natl. Acad. Sci. U.S.A.">
        <title>Aldolase provides an unusual binding site for thrombospondin-related anonymous protein in the invasion machinery of the malaria parasite.</title>
        <authorList>
            <person name="Bosch J."/>
            <person name="Buscaglia C.A."/>
            <person name="Krumm B."/>
            <person name="Ingason B.P."/>
            <person name="Lucas R."/>
            <person name="Roach C."/>
            <person name="Cardozo T."/>
            <person name="Nussenzweig V."/>
            <person name="Hol W.G."/>
        </authorList>
    </citation>
    <scope>X-RAY CRYSTALLOGRAPHY (2.40 ANGSTROMS) IN COMPLEX WITH P.BERGHEI TRAP PEPTIDE (601-606)</scope>
    <scope>ACTIVITY REGULATION</scope>
    <scope>MUTAGENESIS OF ASP-40; GLU-41; ARG-49; LYS-152; ARG-154; ARG-310; GLN-313; ALA-314 AND LEU-317</scope>
</reference>
<sequence length="369" mass="40105">MAHCTEYMNAPKKLPADVAEELATTAQKLVQAGKGILAADESTQTIKKRFDNIKLENTIENRASYRDLLFGTKGLGKFISGAILFEETLFQKNEAGVPMVNLLHNENIIPGIKVDKGLVNIPCTDEEKSTQGLDGLAERCKEYYKAGARFAKWRTVLVIDTAKGKPTDLSIHETAWGLARYASICQQNRLVPIVEPEILADGPHSIEVCAVVTQKVLSCVFKALQENGVLLEGALLKPNMVTAGYECTAKTTTQDVGFLTVRTLRRTVPPALPGVVFLSGGQSEEEASVNLNSINALGPHPWALTFSYGRALQASVLNTWQGKKENVAKAREVLLQRAEANSLATYGKYKGGAGGENAGASLYEKKYVY</sequence>
<evidence type="ECO:0000250" key="1">
    <source>
        <dbReference type="UniProtKB" id="P00883"/>
    </source>
</evidence>
<evidence type="ECO:0000250" key="2">
    <source>
        <dbReference type="UniProtKB" id="Q27744"/>
    </source>
</evidence>
<evidence type="ECO:0000250" key="3">
    <source>
        <dbReference type="UniProtKB" id="Q7KQL9"/>
    </source>
</evidence>
<evidence type="ECO:0000250" key="4">
    <source>
        <dbReference type="UniProtKB" id="Q8I8I2"/>
    </source>
</evidence>
<evidence type="ECO:0000269" key="5">
    <source>
    </source>
</evidence>
<evidence type="ECO:0000269" key="6">
    <source>
    </source>
</evidence>
<evidence type="ECO:0000269" key="7">
    <source>
    </source>
</evidence>
<evidence type="ECO:0000269" key="8">
    <source>
    </source>
</evidence>
<evidence type="ECO:0000303" key="9">
    <source>
    </source>
</evidence>
<evidence type="ECO:0000303" key="10">
    <source>
    </source>
</evidence>
<evidence type="ECO:0000305" key="11"/>
<evidence type="ECO:0000305" key="12">
    <source>
    </source>
</evidence>
<evidence type="ECO:0000305" key="13">
    <source>
    </source>
</evidence>
<evidence type="ECO:0007744" key="14">
    <source>
        <dbReference type="PDB" id="2EPH"/>
    </source>
</evidence>
<evidence type="ECO:0007744" key="15">
    <source>
        <dbReference type="PDB" id="2PC4"/>
    </source>
</evidence>
<evidence type="ECO:0007829" key="16">
    <source>
        <dbReference type="PDB" id="1A5C"/>
    </source>
</evidence>
<evidence type="ECO:0007829" key="17">
    <source>
        <dbReference type="PDB" id="2PC4"/>
    </source>
</evidence>
<protein>
    <recommendedName>
        <fullName evidence="11">Fructose-bisphosphate aldolase</fullName>
        <shortName evidence="10">PfAldo</shortName>
        <ecNumber evidence="13">4.1.2.13</ecNumber>
    </recommendedName>
    <alternativeName>
        <fullName evidence="9">41 kDa antigen</fullName>
    </alternativeName>
</protein>
<feature type="chain" id="PRO_0000216930" description="Fructose-bisphosphate aldolase">
    <location>
        <begin position="1"/>
        <end position="369"/>
    </location>
</feature>
<feature type="active site" description="Proton acceptor" evidence="4">
    <location>
        <position position="195"/>
    </location>
</feature>
<feature type="active site" description="Schiff-base intermediate with dihydroxyacetone phosphate" evidence="4">
    <location>
        <position position="237"/>
    </location>
</feature>
<feature type="binding site" evidence="4">
    <location>
        <position position="40"/>
    </location>
    <ligand>
        <name>dihydroxyacetone phosphate</name>
        <dbReference type="ChEBI" id="CHEBI:57642"/>
    </ligand>
</feature>
<feature type="binding site" evidence="4">
    <location>
        <position position="42"/>
    </location>
    <ligand>
        <name>D-glyceraldehyde 3-phosphate</name>
        <dbReference type="ChEBI" id="CHEBI:59776"/>
    </ligand>
</feature>
<feature type="binding site" evidence="4">
    <location>
        <position position="45"/>
    </location>
    <ligand>
        <name>D-glyceraldehyde 3-phosphate</name>
        <dbReference type="ChEBI" id="CHEBI:59776"/>
    </ligand>
</feature>
<feature type="binding site" evidence="1">
    <location>
        <position position="49"/>
    </location>
    <ligand>
        <name>beta-D-fructose 1,6-bisphosphate</name>
        <dbReference type="ChEBI" id="CHEBI:32966"/>
    </ligand>
</feature>
<feature type="binding site" evidence="4">
    <location>
        <position position="113"/>
    </location>
    <ligand>
        <name>D-glyceraldehyde 3-phosphate</name>
        <dbReference type="ChEBI" id="CHEBI:59776"/>
    </ligand>
</feature>
<feature type="binding site" evidence="4">
    <location>
        <position position="152"/>
    </location>
    <ligand>
        <name>dihydroxyacetone phosphate</name>
        <dbReference type="ChEBI" id="CHEBI:57642"/>
    </ligand>
</feature>
<feature type="binding site" evidence="4">
    <location>
        <position position="195"/>
    </location>
    <ligand>
        <name>D-glyceraldehyde 3-phosphate</name>
        <dbReference type="ChEBI" id="CHEBI:59776"/>
    </ligand>
</feature>
<feature type="binding site" evidence="4">
    <location>
        <position position="237"/>
    </location>
    <ligand>
        <name>dihydroxyacetone phosphate</name>
        <dbReference type="ChEBI" id="CHEBI:57642"/>
    </ligand>
</feature>
<feature type="binding site" evidence="1">
    <location>
        <begin position="279"/>
        <end position="281"/>
    </location>
    <ligand>
        <name>beta-D-fructose 1,6-bisphosphate</name>
        <dbReference type="ChEBI" id="CHEBI:32966"/>
    </ligand>
</feature>
<feature type="binding site" evidence="4">
    <location>
        <position position="279"/>
    </location>
    <ligand>
        <name>dihydroxyacetone phosphate</name>
        <dbReference type="ChEBI" id="CHEBI:57642"/>
    </ligand>
</feature>
<feature type="binding site" evidence="4">
    <location>
        <position position="280"/>
    </location>
    <ligand>
        <name>dihydroxyacetone phosphate</name>
        <dbReference type="ChEBI" id="CHEBI:57642"/>
    </ligand>
</feature>
<feature type="binding site" evidence="1">
    <location>
        <position position="307"/>
    </location>
    <ligand>
        <name>beta-D-fructose 1,6-bisphosphate</name>
        <dbReference type="ChEBI" id="CHEBI:32966"/>
    </ligand>
</feature>
<feature type="binding site" evidence="4">
    <location>
        <position position="309"/>
    </location>
    <ligand>
        <name>dihydroxyacetone phosphate</name>
        <dbReference type="ChEBI" id="CHEBI:57642"/>
    </ligand>
</feature>
<feature type="binding site" evidence="1">
    <location>
        <position position="310"/>
    </location>
    <ligand>
        <name>beta-D-fructose 1,6-bisphosphate</name>
        <dbReference type="ChEBI" id="CHEBI:32966"/>
    </ligand>
</feature>
<feature type="binding site" evidence="4">
    <location>
        <position position="310"/>
    </location>
    <ligand>
        <name>dihydroxyacetone phosphate</name>
        <dbReference type="ChEBI" id="CHEBI:57642"/>
    </ligand>
</feature>
<feature type="site" description="Necessary for preference for fructose 1,6-bisphosphate over fructose 1-phosphate" evidence="1">
    <location>
        <position position="369"/>
    </location>
</feature>
<feature type="mutagenesis site" description="Reduces binding to TRAP." evidence="5">
    <original>D</original>
    <variation>G</variation>
    <location>
        <position position="40"/>
    </location>
</feature>
<feature type="mutagenesis site" description="Abolishes binding to TRAP." evidence="5">
    <original>E</original>
    <variation>G</variation>
    <location>
        <position position="41"/>
    </location>
</feature>
<feature type="mutagenesis site" description="Abolishes binding to TRAP." evidence="5">
    <original>R</original>
    <variation>D</variation>
    <variation>G</variation>
    <location>
        <position position="49"/>
    </location>
</feature>
<feature type="mutagenesis site" description="Severe reduction in the binding to TRAP." evidence="5">
    <original>K</original>
    <variation>D</variation>
    <location>
        <position position="152"/>
    </location>
</feature>
<feature type="mutagenesis site" description="Abolishes binding to TRAP." evidence="5">
    <original>R</original>
    <variation>G</variation>
    <location>
        <position position="154"/>
    </location>
</feature>
<feature type="mutagenesis site" description="Severe reduction in the binding to TRAP." evidence="5">
    <original>R</original>
    <variation>S</variation>
    <location>
        <position position="310"/>
    </location>
</feature>
<feature type="mutagenesis site" description="Severe reduction in the binding to TRAP." evidence="5">
    <original>Q</original>
    <variation>S</variation>
    <location>
        <position position="313"/>
    </location>
</feature>
<feature type="mutagenesis site" description="Reduces binding to TRAP." evidence="5">
    <original>A</original>
    <variation>G</variation>
    <location>
        <position position="314"/>
    </location>
</feature>
<feature type="mutagenesis site" description="Abolishes binding to TRAP." evidence="5">
    <original>L</original>
    <variation>D</variation>
    <location>
        <position position="317"/>
    </location>
</feature>
<feature type="helix" evidence="17">
    <location>
        <begin position="16"/>
        <end position="29"/>
    </location>
</feature>
<feature type="strand" evidence="17">
    <location>
        <begin position="35"/>
        <end position="39"/>
    </location>
</feature>
<feature type="helix" evidence="17">
    <location>
        <begin position="43"/>
        <end position="52"/>
    </location>
</feature>
<feature type="helix" evidence="17">
    <location>
        <begin position="59"/>
        <end position="70"/>
    </location>
</feature>
<feature type="turn" evidence="17">
    <location>
        <begin position="76"/>
        <end position="78"/>
    </location>
</feature>
<feature type="strand" evidence="17">
    <location>
        <begin position="79"/>
        <end position="84"/>
    </location>
</feature>
<feature type="helix" evidence="17">
    <location>
        <begin position="86"/>
        <end position="89"/>
    </location>
</feature>
<feature type="helix" evidence="17">
    <location>
        <begin position="99"/>
        <end position="106"/>
    </location>
</feature>
<feature type="strand" evidence="17">
    <location>
        <begin position="109"/>
        <end position="113"/>
    </location>
</feature>
<feature type="strand" evidence="17">
    <location>
        <begin position="118"/>
        <end position="120"/>
    </location>
</feature>
<feature type="strand" evidence="17">
    <location>
        <begin position="124"/>
        <end position="126"/>
    </location>
</feature>
<feature type="strand" evidence="17">
    <location>
        <begin position="128"/>
        <end position="130"/>
    </location>
</feature>
<feature type="turn" evidence="16">
    <location>
        <begin position="133"/>
        <end position="135"/>
    </location>
</feature>
<feature type="helix" evidence="17">
    <location>
        <begin position="136"/>
        <end position="146"/>
    </location>
</feature>
<feature type="strand" evidence="17">
    <location>
        <begin position="150"/>
        <end position="157"/>
    </location>
</feature>
<feature type="helix" evidence="17">
    <location>
        <begin position="161"/>
        <end position="163"/>
    </location>
</feature>
<feature type="helix" evidence="17">
    <location>
        <begin position="168"/>
        <end position="187"/>
    </location>
</feature>
<feature type="strand" evidence="17">
    <location>
        <begin position="191"/>
        <end position="198"/>
    </location>
</feature>
<feature type="helix" evidence="17">
    <location>
        <begin position="206"/>
        <end position="226"/>
    </location>
</feature>
<feature type="helix" evidence="17">
    <location>
        <begin position="231"/>
        <end position="233"/>
    </location>
</feature>
<feature type="helix" evidence="17">
    <location>
        <begin position="253"/>
        <end position="267"/>
    </location>
</feature>
<feature type="strand" evidence="17">
    <location>
        <begin position="274"/>
        <end position="277"/>
    </location>
</feature>
<feature type="helix" evidence="17">
    <location>
        <begin position="284"/>
        <end position="296"/>
    </location>
</feature>
<feature type="strand" evidence="17">
    <location>
        <begin position="301"/>
        <end position="309"/>
    </location>
</feature>
<feature type="helix" evidence="17">
    <location>
        <begin position="310"/>
        <end position="318"/>
    </location>
</feature>
<feature type="turn" evidence="17">
    <location>
        <begin position="319"/>
        <end position="322"/>
    </location>
</feature>
<feature type="turn" evidence="17">
    <location>
        <begin position="324"/>
        <end position="326"/>
    </location>
</feature>
<feature type="helix" evidence="17">
    <location>
        <begin position="327"/>
        <end position="346"/>
    </location>
</feature>
<accession>P14223</accession>
<comment type="function">
    <text evidence="3 6">Plays a key role in glycolysis by catalyzing the cleavage of fructose 1,6-bisphosphate into dihydroxyacetone phosphate and glyceraldehyde 3-phosphate (PubMed:2190085). Independently of its catalytic activity, connects the actin filaments, and thus the actomyosin motor, to cell surface adhesins of the thrombospondin-related anonymous protein (TRAP), the erythrocyte binding ligand (EBL) and reticulocyte binding homolog (RH) protein families; this interaction is probably involved in transducing the motor force across the parasite surface required for sporozoite and ookinete gliding motility and merozoite invasion (By similarity). Stimulates actin polymerisation (By similarity).</text>
</comment>
<comment type="catalytic activity">
    <reaction evidence="13">
        <text>beta-D-fructose 1,6-bisphosphate = D-glyceraldehyde 3-phosphate + dihydroxyacetone phosphate</text>
        <dbReference type="Rhea" id="RHEA:14729"/>
        <dbReference type="ChEBI" id="CHEBI:32966"/>
        <dbReference type="ChEBI" id="CHEBI:57642"/>
        <dbReference type="ChEBI" id="CHEBI:59776"/>
        <dbReference type="EC" id="4.1.2.13"/>
    </reaction>
</comment>
<comment type="activity regulation">
    <text evidence="12">The cytoplasmic tail of TRAP and probably other adhesins acts as a competitive inhibitor as the binding sites of the glycolytic substrate fructose 1,6-bisphosphate and TRAP partially overlap.</text>
</comment>
<comment type="pathway">
    <text evidence="13">Carbohydrate degradation; glycolysis; D-glyceraldehyde 3-phosphate and glycerone phosphate from D-glucose: step 4/4.</text>
</comment>
<comment type="subunit">
    <text evidence="2 3 5 8">Homotetramer (PubMed:9521758). Interacts with TRAP (via cytoplasmic domain); the interaction prevents substrate binding and thereby inhibits aldolase activity (PubMed:17426153). Interacts with MTRAP (via cytoplasmic domain); MTRAP phosphorylation may increase the binding to FBPA (By similarity). Interact with RH1 (via cytoplasmic domain) (By similarity). Interacts with RH2b (via cytoplasmic domain) (By similarity). Interacts with RH4 (via cytoplasmic domain) (By similarity). Interacts with AMA1 (via cytoplasmic domain); the interaction is weak, however it may be increased upon AMA1 phosphorylation (By similarity). Interacts with EBA140 (via cytoplasmic domain); the interaction is weak (By similarity). Interacts with EBA175 (via cytoplasmic domain); the interaction is weak (By similarity). Interacts with EBA181 (via cytoplasmic domain); the interaction is weak (By similarity). Interacts with G-actin and F-actin (By similarity). May interact with ACT2/actin II; the interaction inhibits FBPA catalytic activity (By similarity). Interacts with human SLC4A1/band 3 (via N-terminus); the interaction inhibits FBPA catalytic activity (By similarity).</text>
</comment>
<comment type="subcellular location">
    <subcellularLocation>
        <location evidence="6">Cytoplasm</location>
    </subcellularLocation>
    <subcellularLocation>
        <location evidence="6">Membrane</location>
        <topology evidence="11">Peripheral membrane protein</topology>
        <orientation evidence="11">Cytoplasmic side</orientation>
    </subcellularLocation>
    <subcellularLocation>
        <location evidence="2">Host cell membrane</location>
        <topology evidence="11">Peripheral membrane protein</topology>
        <orientation evidence="11">Cytoplasmic side</orientation>
    </subcellularLocation>
</comment>
<comment type="developmental stage">
    <text evidence="6 7">Expressed during parasite asexual blood stages, including in schizonts and free merozoites (at protein level).</text>
</comment>
<comment type="similarity">
    <text evidence="11">Belongs to the class I fructose-bisphosphate aldolase family.</text>
</comment>
<organism>
    <name type="scientific">Plasmodium falciparum</name>
    <dbReference type="NCBI Taxonomy" id="5833"/>
    <lineage>
        <taxon>Eukaryota</taxon>
        <taxon>Sar</taxon>
        <taxon>Alveolata</taxon>
        <taxon>Apicomplexa</taxon>
        <taxon>Aconoidasida</taxon>
        <taxon>Haemosporida</taxon>
        <taxon>Plasmodiidae</taxon>
        <taxon>Plasmodium</taxon>
        <taxon>Plasmodium (Laverania)</taxon>
    </lineage>
</organism>
<proteinExistence type="evidence at protein level"/>
<name>ALF_PLAFA</name>
<gene>
    <name evidence="11" type="primary">FBPA</name>
</gene>
<dbReference type="EC" id="4.1.2.13" evidence="13"/>
<dbReference type="EMBL" id="M28881">
    <property type="protein sequence ID" value="AAA29473.1"/>
    <property type="molecule type" value="Genomic_DNA"/>
</dbReference>
<dbReference type="EMBL" id="A13461">
    <property type="protein sequence ID" value="CAA01107.1"/>
    <property type="molecule type" value="Unassigned_DNA"/>
</dbReference>
<dbReference type="EMBL" id="A13481">
    <property type="protein sequence ID" value="CAA01117.1"/>
    <property type="molecule type" value="Unassigned_DNA"/>
</dbReference>
<dbReference type="PIR" id="A44942">
    <property type="entry name" value="A44942"/>
</dbReference>
<dbReference type="PDB" id="1A5C">
    <property type="method" value="X-ray"/>
    <property type="resolution" value="3.00 A"/>
    <property type="chains" value="A/B=2-369"/>
</dbReference>
<dbReference type="PDB" id="2EPH">
    <property type="method" value="X-ray"/>
    <property type="resolution" value="2.70 A"/>
    <property type="chains" value="A/B/C/D=1-369"/>
</dbReference>
<dbReference type="PDB" id="2PC4">
    <property type="method" value="X-ray"/>
    <property type="resolution" value="2.40 A"/>
    <property type="chains" value="A/B/C/D=1-369"/>
</dbReference>
<dbReference type="PDBsum" id="1A5C"/>
<dbReference type="PDBsum" id="2EPH"/>
<dbReference type="PDBsum" id="2PC4"/>
<dbReference type="SMR" id="P14223"/>
<dbReference type="DIP" id="DIP-60915N"/>
<dbReference type="IntAct" id="P14223">
    <property type="interactions" value="1"/>
</dbReference>
<dbReference type="DrugBank" id="DB11638">
    <property type="generic name" value="Artenimol"/>
</dbReference>
<dbReference type="ABCD" id="P14223">
    <property type="antibodies" value="1 sequenced antibody"/>
</dbReference>
<dbReference type="EnsemblProtists" id="CZU00144">
    <property type="protein sequence ID" value="CZU00144"/>
    <property type="gene ID" value="PF3D7_1444800"/>
</dbReference>
<dbReference type="VEuPathDB" id="PlasmoDB:PF3D7_1444800"/>
<dbReference type="VEuPathDB" id="PlasmoDB:Pf7G8-2_000518600"/>
<dbReference type="VEuPathDB" id="PlasmoDB:Pf7G8_140050000"/>
<dbReference type="VEuPathDB" id="PlasmoDB:PfCD01_140050200"/>
<dbReference type="VEuPathDB" id="PlasmoDB:PfDd2_140049200"/>
<dbReference type="VEuPathDB" id="PlasmoDB:PfGA01_140050300"/>
<dbReference type="VEuPathDB" id="PlasmoDB:PfGB4_140050900"/>
<dbReference type="VEuPathDB" id="PlasmoDB:PfGN01_140050100"/>
<dbReference type="VEuPathDB" id="PlasmoDB:PfHB3_140050500"/>
<dbReference type="VEuPathDB" id="PlasmoDB:PfIT_140051200"/>
<dbReference type="VEuPathDB" id="PlasmoDB:PfKE01_140049700"/>
<dbReference type="VEuPathDB" id="PlasmoDB:PfKH01_140050300"/>
<dbReference type="VEuPathDB" id="PlasmoDB:PfKH02_140050500"/>
<dbReference type="VEuPathDB" id="PlasmoDB:PfML01_140050400"/>
<dbReference type="VEuPathDB" id="PlasmoDB:PfNF135_140048900"/>
<dbReference type="VEuPathDB" id="PlasmoDB:PfNF166_140047700"/>
<dbReference type="VEuPathDB" id="PlasmoDB:PfNF54_140048500"/>
<dbReference type="VEuPathDB" id="PlasmoDB:PfSD01_140048100"/>
<dbReference type="VEuPathDB" id="PlasmoDB:PfSN01_140052000"/>
<dbReference type="VEuPathDB" id="PlasmoDB:PfTG01_140050100"/>
<dbReference type="OMA" id="WRAVITI"/>
<dbReference type="SABIO-RK" id="P14223"/>
<dbReference type="UniPathway" id="UPA00109">
    <property type="reaction ID" value="UER00183"/>
</dbReference>
<dbReference type="EvolutionaryTrace" id="P14223"/>
<dbReference type="GO" id="GO:0005737">
    <property type="term" value="C:cytoplasm"/>
    <property type="evidence" value="ECO:0007669"/>
    <property type="project" value="UniProtKB-SubCell"/>
</dbReference>
<dbReference type="GO" id="GO:0020002">
    <property type="term" value="C:host cell plasma membrane"/>
    <property type="evidence" value="ECO:0007669"/>
    <property type="project" value="UniProtKB-SubCell"/>
</dbReference>
<dbReference type="GO" id="GO:0016020">
    <property type="term" value="C:membrane"/>
    <property type="evidence" value="ECO:0007669"/>
    <property type="project" value="UniProtKB-SubCell"/>
</dbReference>
<dbReference type="GO" id="GO:0003779">
    <property type="term" value="F:actin binding"/>
    <property type="evidence" value="ECO:0007669"/>
    <property type="project" value="UniProtKB-KW"/>
</dbReference>
<dbReference type="GO" id="GO:0004332">
    <property type="term" value="F:fructose-bisphosphate aldolase activity"/>
    <property type="evidence" value="ECO:0007669"/>
    <property type="project" value="UniProtKB-EC"/>
</dbReference>
<dbReference type="GO" id="GO:0006096">
    <property type="term" value="P:glycolytic process"/>
    <property type="evidence" value="ECO:0007669"/>
    <property type="project" value="UniProtKB-UniPathway"/>
</dbReference>
<dbReference type="CDD" id="cd00948">
    <property type="entry name" value="FBP_aldolase_I_a"/>
    <property type="match status" value="1"/>
</dbReference>
<dbReference type="FunFam" id="3.20.20.70:FF:000187">
    <property type="entry name" value="Fructose-bisphosphate aldolase"/>
    <property type="match status" value="1"/>
</dbReference>
<dbReference type="Gene3D" id="3.20.20.70">
    <property type="entry name" value="Aldolase class I"/>
    <property type="match status" value="1"/>
</dbReference>
<dbReference type="InterPro" id="IPR029768">
    <property type="entry name" value="Aldolase_I_AS"/>
</dbReference>
<dbReference type="InterPro" id="IPR013785">
    <property type="entry name" value="Aldolase_TIM"/>
</dbReference>
<dbReference type="InterPro" id="IPR000741">
    <property type="entry name" value="FBA_I"/>
</dbReference>
<dbReference type="NCBIfam" id="NF033379">
    <property type="entry name" value="FrucBisAld_I"/>
    <property type="match status" value="1"/>
</dbReference>
<dbReference type="PANTHER" id="PTHR11627">
    <property type="entry name" value="FRUCTOSE-BISPHOSPHATE ALDOLASE"/>
    <property type="match status" value="1"/>
</dbReference>
<dbReference type="Pfam" id="PF00274">
    <property type="entry name" value="Glycolytic"/>
    <property type="match status" value="1"/>
</dbReference>
<dbReference type="SUPFAM" id="SSF51569">
    <property type="entry name" value="Aldolase"/>
    <property type="match status" value="1"/>
</dbReference>
<dbReference type="PROSITE" id="PS00158">
    <property type="entry name" value="ALDOLASE_CLASS_I"/>
    <property type="match status" value="1"/>
</dbReference>
<keyword id="KW-0002">3D-structure</keyword>
<keyword id="KW-0009">Actin-binding</keyword>
<keyword id="KW-0963">Cytoplasm</keyword>
<keyword id="KW-0324">Glycolysis</keyword>
<keyword id="KW-1032">Host cell membrane</keyword>
<keyword id="KW-1043">Host membrane</keyword>
<keyword id="KW-0456">Lyase</keyword>
<keyword id="KW-0472">Membrane</keyword>
<keyword id="KW-0704">Schiff base</keyword>